<sequence>MRVLVLGGGVVGVTSAYYLARAGHEVTVLDRQPGAGLETSFANAGQVSPGYSAPWAAPGIPLKAMKWLMMRHRPLVLWPQLEPRLYGWLARMLANCTQEAYQRNKGRMVRLAEFSRDALRDLRGETGIAYDHREKGTLQLFRTRKQLDHVGDDTRVLDAYGVAYEVLDPEGCIAAEPALARVRDTFVGGLRLPGDETGDAHLFTQRLAALCADRGVRFRFGVAVARLHHEAGRVTGVETATGEVLRAEAYVAAMGSYTPALLRPLGLSLPVYPVKGYSLTLPVTDEGSAPVSTVMDETYKVAITRLGDRIRVGGTAELAGFSQALRGPRRATLERSLTDLFPAGGDLSRATFWTGLRPMTPDGTPIVGATAYGNLYTNTGHGTLGWTMACGSGRMLADLITGRHPEIAHEDFAERRYRRAA</sequence>
<feature type="chain" id="PRO_1000138658" description="D-amino acid dehydrogenase">
    <location>
        <begin position="1"/>
        <end position="421"/>
    </location>
</feature>
<feature type="binding site" evidence="1">
    <location>
        <begin position="3"/>
        <end position="17"/>
    </location>
    <ligand>
        <name>FAD</name>
        <dbReference type="ChEBI" id="CHEBI:57692"/>
    </ligand>
</feature>
<name>DADA_METS4</name>
<protein>
    <recommendedName>
        <fullName evidence="1">D-amino acid dehydrogenase</fullName>
        <ecNumber evidence="1">1.4.99.-</ecNumber>
    </recommendedName>
</protein>
<evidence type="ECO:0000255" key="1">
    <source>
        <dbReference type="HAMAP-Rule" id="MF_01202"/>
    </source>
</evidence>
<reference key="1">
    <citation type="submission" date="2008-02" db="EMBL/GenBank/DDBJ databases">
        <title>Complete sequence of chromosome of Methylobacterium sp. 4-46.</title>
        <authorList>
            <consortium name="US DOE Joint Genome Institute"/>
            <person name="Copeland A."/>
            <person name="Lucas S."/>
            <person name="Lapidus A."/>
            <person name="Glavina del Rio T."/>
            <person name="Dalin E."/>
            <person name="Tice H."/>
            <person name="Bruce D."/>
            <person name="Goodwin L."/>
            <person name="Pitluck S."/>
            <person name="Chertkov O."/>
            <person name="Brettin T."/>
            <person name="Detter J.C."/>
            <person name="Han C."/>
            <person name="Kuske C.R."/>
            <person name="Schmutz J."/>
            <person name="Larimer F."/>
            <person name="Land M."/>
            <person name="Hauser L."/>
            <person name="Kyrpides N."/>
            <person name="Ivanova N."/>
            <person name="Marx C.J."/>
            <person name="Richardson P."/>
        </authorList>
    </citation>
    <scope>NUCLEOTIDE SEQUENCE [LARGE SCALE GENOMIC DNA]</scope>
    <source>
        <strain>4-46</strain>
    </source>
</reference>
<organism>
    <name type="scientific">Methylobacterium sp. (strain 4-46)</name>
    <dbReference type="NCBI Taxonomy" id="426117"/>
    <lineage>
        <taxon>Bacteria</taxon>
        <taxon>Pseudomonadati</taxon>
        <taxon>Pseudomonadota</taxon>
        <taxon>Alphaproteobacteria</taxon>
        <taxon>Hyphomicrobiales</taxon>
        <taxon>Methylobacteriaceae</taxon>
        <taxon>Methylobacterium</taxon>
    </lineage>
</organism>
<keyword id="KW-0274">FAD</keyword>
<keyword id="KW-0285">Flavoprotein</keyword>
<keyword id="KW-0560">Oxidoreductase</keyword>
<accession>B0UBI8</accession>
<comment type="function">
    <text evidence="1">Oxidative deamination of D-amino acids.</text>
</comment>
<comment type="catalytic activity">
    <reaction evidence="1">
        <text>a D-alpha-amino acid + A + H2O = a 2-oxocarboxylate + AH2 + NH4(+)</text>
        <dbReference type="Rhea" id="RHEA:18125"/>
        <dbReference type="ChEBI" id="CHEBI:13193"/>
        <dbReference type="ChEBI" id="CHEBI:15377"/>
        <dbReference type="ChEBI" id="CHEBI:17499"/>
        <dbReference type="ChEBI" id="CHEBI:28938"/>
        <dbReference type="ChEBI" id="CHEBI:35179"/>
        <dbReference type="ChEBI" id="CHEBI:59871"/>
    </reaction>
</comment>
<comment type="cofactor">
    <cofactor evidence="1">
        <name>FAD</name>
        <dbReference type="ChEBI" id="CHEBI:57692"/>
    </cofactor>
</comment>
<comment type="pathway">
    <text>Amino-acid degradation; D-alanine degradation; NH(3) and pyruvate from D-alanine: step 1/1.</text>
</comment>
<comment type="similarity">
    <text evidence="1">Belongs to the DadA oxidoreductase family.</text>
</comment>
<gene>
    <name evidence="1" type="primary">dadA</name>
    <name type="ordered locus">M446_2122</name>
</gene>
<dbReference type="EC" id="1.4.99.-" evidence="1"/>
<dbReference type="EMBL" id="CP000943">
    <property type="protein sequence ID" value="ACA16584.1"/>
    <property type="molecule type" value="Genomic_DNA"/>
</dbReference>
<dbReference type="RefSeq" id="WP_012331993.1">
    <property type="nucleotide sequence ID" value="NC_010511.1"/>
</dbReference>
<dbReference type="SMR" id="B0UBI8"/>
<dbReference type="STRING" id="426117.M446_2122"/>
<dbReference type="KEGG" id="met:M446_2122"/>
<dbReference type="eggNOG" id="COG0665">
    <property type="taxonomic scope" value="Bacteria"/>
</dbReference>
<dbReference type="HOGENOM" id="CLU_007884_9_2_5"/>
<dbReference type="UniPathway" id="UPA00043">
    <property type="reaction ID" value="UER00498"/>
</dbReference>
<dbReference type="GO" id="GO:0005737">
    <property type="term" value="C:cytoplasm"/>
    <property type="evidence" value="ECO:0007669"/>
    <property type="project" value="TreeGrafter"/>
</dbReference>
<dbReference type="GO" id="GO:0005886">
    <property type="term" value="C:plasma membrane"/>
    <property type="evidence" value="ECO:0007669"/>
    <property type="project" value="TreeGrafter"/>
</dbReference>
<dbReference type="GO" id="GO:0008718">
    <property type="term" value="F:D-amino-acid dehydrogenase activity"/>
    <property type="evidence" value="ECO:0007669"/>
    <property type="project" value="UniProtKB-UniRule"/>
</dbReference>
<dbReference type="GO" id="GO:0055130">
    <property type="term" value="P:D-alanine catabolic process"/>
    <property type="evidence" value="ECO:0007669"/>
    <property type="project" value="UniProtKB-UniPathway"/>
</dbReference>
<dbReference type="FunFam" id="3.50.50.60:FF:000020">
    <property type="entry name" value="D-amino acid dehydrogenase"/>
    <property type="match status" value="1"/>
</dbReference>
<dbReference type="Gene3D" id="3.30.9.10">
    <property type="entry name" value="D-Amino Acid Oxidase, subunit A, domain 2"/>
    <property type="match status" value="1"/>
</dbReference>
<dbReference type="Gene3D" id="3.50.50.60">
    <property type="entry name" value="FAD/NAD(P)-binding domain"/>
    <property type="match status" value="2"/>
</dbReference>
<dbReference type="HAMAP" id="MF_01202">
    <property type="entry name" value="DadA"/>
    <property type="match status" value="1"/>
</dbReference>
<dbReference type="InterPro" id="IPR023080">
    <property type="entry name" value="DadA"/>
</dbReference>
<dbReference type="InterPro" id="IPR006076">
    <property type="entry name" value="FAD-dep_OxRdtase"/>
</dbReference>
<dbReference type="InterPro" id="IPR036188">
    <property type="entry name" value="FAD/NAD-bd_sf"/>
</dbReference>
<dbReference type="NCBIfam" id="NF001933">
    <property type="entry name" value="PRK00711.1"/>
    <property type="match status" value="1"/>
</dbReference>
<dbReference type="PANTHER" id="PTHR13847:SF280">
    <property type="entry name" value="D-AMINO ACID DEHYDROGENASE"/>
    <property type="match status" value="1"/>
</dbReference>
<dbReference type="PANTHER" id="PTHR13847">
    <property type="entry name" value="SARCOSINE DEHYDROGENASE-RELATED"/>
    <property type="match status" value="1"/>
</dbReference>
<dbReference type="Pfam" id="PF01266">
    <property type="entry name" value="DAO"/>
    <property type="match status" value="1"/>
</dbReference>
<dbReference type="SUPFAM" id="SSF54373">
    <property type="entry name" value="FAD-linked reductases, C-terminal domain"/>
    <property type="match status" value="1"/>
</dbReference>
<dbReference type="SUPFAM" id="SSF51905">
    <property type="entry name" value="FAD/NAD(P)-binding domain"/>
    <property type="match status" value="1"/>
</dbReference>
<proteinExistence type="inferred from homology"/>